<comment type="function">
    <text evidence="1">Catalyzes the complicated ring closure reaction between the two acyclic compounds 1-deoxy-D-xylulose-5-phosphate (DXP) and 3-amino-2-oxopropyl phosphate (1-amino-acetone-3-phosphate or AAP) to form pyridoxine 5'-phosphate (PNP) and inorganic phosphate.</text>
</comment>
<comment type="catalytic activity">
    <reaction evidence="1">
        <text>3-amino-2-oxopropyl phosphate + 1-deoxy-D-xylulose 5-phosphate = pyridoxine 5'-phosphate + phosphate + 2 H2O + H(+)</text>
        <dbReference type="Rhea" id="RHEA:15265"/>
        <dbReference type="ChEBI" id="CHEBI:15377"/>
        <dbReference type="ChEBI" id="CHEBI:15378"/>
        <dbReference type="ChEBI" id="CHEBI:43474"/>
        <dbReference type="ChEBI" id="CHEBI:57279"/>
        <dbReference type="ChEBI" id="CHEBI:57792"/>
        <dbReference type="ChEBI" id="CHEBI:58589"/>
        <dbReference type="EC" id="2.6.99.2"/>
    </reaction>
</comment>
<comment type="pathway">
    <text evidence="1">Cofactor biosynthesis; pyridoxine 5'-phosphate biosynthesis; pyridoxine 5'-phosphate from D-erythrose 4-phosphate: step 5/5.</text>
</comment>
<comment type="subunit">
    <text evidence="1">Homooctamer; tetramer of dimers.</text>
</comment>
<comment type="subcellular location">
    <subcellularLocation>
        <location evidence="1">Cytoplasm</location>
    </subcellularLocation>
</comment>
<comment type="similarity">
    <text evidence="1">Belongs to the PNP synthase family.</text>
</comment>
<proteinExistence type="inferred from homology"/>
<protein>
    <recommendedName>
        <fullName evidence="1">Pyridoxine 5'-phosphate synthase</fullName>
        <shortName evidence="1">PNP synthase</shortName>
        <ecNumber evidence="1">2.6.99.2</ecNumber>
    </recommendedName>
</protein>
<gene>
    <name evidence="1" type="primary">pdxJ</name>
    <name type="ordered locus">BPP1762</name>
</gene>
<name>PDXJ_BORPA</name>
<keyword id="KW-0963">Cytoplasm</keyword>
<keyword id="KW-0664">Pyridoxine biosynthesis</keyword>
<keyword id="KW-0808">Transferase</keyword>
<feature type="chain" id="PRO_0000231788" description="Pyridoxine 5'-phosphate synthase">
    <location>
        <begin position="1"/>
        <end position="248"/>
    </location>
</feature>
<feature type="active site" description="Proton acceptor" evidence="1">
    <location>
        <position position="43"/>
    </location>
</feature>
<feature type="active site" description="Proton acceptor" evidence="1">
    <location>
        <position position="70"/>
    </location>
</feature>
<feature type="active site" description="Proton donor" evidence="1">
    <location>
        <position position="191"/>
    </location>
</feature>
<feature type="binding site" evidence="1">
    <location>
        <position position="7"/>
    </location>
    <ligand>
        <name>3-amino-2-oxopropyl phosphate</name>
        <dbReference type="ChEBI" id="CHEBI:57279"/>
    </ligand>
</feature>
<feature type="binding site" evidence="1">
    <location>
        <begin position="9"/>
        <end position="10"/>
    </location>
    <ligand>
        <name>1-deoxy-D-xylulose 5-phosphate</name>
        <dbReference type="ChEBI" id="CHEBI:57792"/>
    </ligand>
</feature>
<feature type="binding site" evidence="1">
    <location>
        <position position="18"/>
    </location>
    <ligand>
        <name>3-amino-2-oxopropyl phosphate</name>
        <dbReference type="ChEBI" id="CHEBI:57279"/>
    </ligand>
</feature>
<feature type="binding site" evidence="1">
    <location>
        <position position="45"/>
    </location>
    <ligand>
        <name>1-deoxy-D-xylulose 5-phosphate</name>
        <dbReference type="ChEBI" id="CHEBI:57792"/>
    </ligand>
</feature>
<feature type="binding site" evidence="1">
    <location>
        <position position="50"/>
    </location>
    <ligand>
        <name>1-deoxy-D-xylulose 5-phosphate</name>
        <dbReference type="ChEBI" id="CHEBI:57792"/>
    </ligand>
</feature>
<feature type="binding site" evidence="1">
    <location>
        <position position="100"/>
    </location>
    <ligand>
        <name>1-deoxy-D-xylulose 5-phosphate</name>
        <dbReference type="ChEBI" id="CHEBI:57792"/>
    </ligand>
</feature>
<feature type="binding site" evidence="1">
    <location>
        <position position="192"/>
    </location>
    <ligand>
        <name>3-amino-2-oxopropyl phosphate</name>
        <dbReference type="ChEBI" id="CHEBI:57279"/>
    </ligand>
</feature>
<feature type="binding site" evidence="1">
    <location>
        <begin position="213"/>
        <end position="214"/>
    </location>
    <ligand>
        <name>3-amino-2-oxopropyl phosphate</name>
        <dbReference type="ChEBI" id="CHEBI:57279"/>
    </ligand>
</feature>
<feature type="site" description="Transition state stabilizer" evidence="1">
    <location>
        <position position="151"/>
    </location>
</feature>
<evidence type="ECO:0000255" key="1">
    <source>
        <dbReference type="HAMAP-Rule" id="MF_00279"/>
    </source>
</evidence>
<organism>
    <name type="scientific">Bordetella parapertussis (strain 12822 / ATCC BAA-587 / NCTC 13253)</name>
    <dbReference type="NCBI Taxonomy" id="257311"/>
    <lineage>
        <taxon>Bacteria</taxon>
        <taxon>Pseudomonadati</taxon>
        <taxon>Pseudomonadota</taxon>
        <taxon>Betaproteobacteria</taxon>
        <taxon>Burkholderiales</taxon>
        <taxon>Alcaligenaceae</taxon>
        <taxon>Bordetella</taxon>
    </lineage>
</organism>
<dbReference type="EC" id="2.6.99.2" evidence="1"/>
<dbReference type="EMBL" id="BX640428">
    <property type="protein sequence ID" value="CAE37063.1"/>
    <property type="molecule type" value="Genomic_DNA"/>
</dbReference>
<dbReference type="RefSeq" id="WP_003810344.1">
    <property type="nucleotide sequence ID" value="NC_002928.3"/>
</dbReference>
<dbReference type="SMR" id="Q7W9J7"/>
<dbReference type="GeneID" id="93203526"/>
<dbReference type="KEGG" id="bpa:BPP1762"/>
<dbReference type="HOGENOM" id="CLU_074563_0_0_4"/>
<dbReference type="UniPathway" id="UPA00244">
    <property type="reaction ID" value="UER00313"/>
</dbReference>
<dbReference type="Proteomes" id="UP000001421">
    <property type="component" value="Chromosome"/>
</dbReference>
<dbReference type="GO" id="GO:0005829">
    <property type="term" value="C:cytosol"/>
    <property type="evidence" value="ECO:0007669"/>
    <property type="project" value="TreeGrafter"/>
</dbReference>
<dbReference type="GO" id="GO:0033856">
    <property type="term" value="F:pyridoxine 5'-phosphate synthase activity"/>
    <property type="evidence" value="ECO:0007669"/>
    <property type="project" value="UniProtKB-EC"/>
</dbReference>
<dbReference type="GO" id="GO:0008615">
    <property type="term" value="P:pyridoxine biosynthetic process"/>
    <property type="evidence" value="ECO:0007669"/>
    <property type="project" value="UniProtKB-UniRule"/>
</dbReference>
<dbReference type="CDD" id="cd00003">
    <property type="entry name" value="PNPsynthase"/>
    <property type="match status" value="1"/>
</dbReference>
<dbReference type="FunFam" id="3.20.20.70:FF:000042">
    <property type="entry name" value="Pyridoxine 5'-phosphate synthase"/>
    <property type="match status" value="1"/>
</dbReference>
<dbReference type="Gene3D" id="3.20.20.70">
    <property type="entry name" value="Aldolase class I"/>
    <property type="match status" value="1"/>
</dbReference>
<dbReference type="HAMAP" id="MF_00279">
    <property type="entry name" value="PdxJ"/>
    <property type="match status" value="1"/>
</dbReference>
<dbReference type="InterPro" id="IPR013785">
    <property type="entry name" value="Aldolase_TIM"/>
</dbReference>
<dbReference type="InterPro" id="IPR004569">
    <property type="entry name" value="PyrdxlP_synth_PdxJ"/>
</dbReference>
<dbReference type="InterPro" id="IPR036130">
    <property type="entry name" value="Pyridoxine-5'_phos_synth"/>
</dbReference>
<dbReference type="NCBIfam" id="TIGR00559">
    <property type="entry name" value="pdxJ"/>
    <property type="match status" value="1"/>
</dbReference>
<dbReference type="NCBIfam" id="NF003623">
    <property type="entry name" value="PRK05265.1-1"/>
    <property type="match status" value="1"/>
</dbReference>
<dbReference type="NCBIfam" id="NF003625">
    <property type="entry name" value="PRK05265.1-3"/>
    <property type="match status" value="1"/>
</dbReference>
<dbReference type="NCBIfam" id="NF003627">
    <property type="entry name" value="PRK05265.1-5"/>
    <property type="match status" value="1"/>
</dbReference>
<dbReference type="PANTHER" id="PTHR30456">
    <property type="entry name" value="PYRIDOXINE 5'-PHOSPHATE SYNTHASE"/>
    <property type="match status" value="1"/>
</dbReference>
<dbReference type="PANTHER" id="PTHR30456:SF0">
    <property type="entry name" value="PYRIDOXINE 5'-PHOSPHATE SYNTHASE"/>
    <property type="match status" value="1"/>
</dbReference>
<dbReference type="Pfam" id="PF03740">
    <property type="entry name" value="PdxJ"/>
    <property type="match status" value="1"/>
</dbReference>
<dbReference type="SUPFAM" id="SSF63892">
    <property type="entry name" value="Pyridoxine 5'-phosphate synthase"/>
    <property type="match status" value="1"/>
</dbReference>
<sequence>MIELGVNIDHVATLRQQRHTAYPDPVQAALRAEDAGADLITLHLREDRRHIQDADVYAIRPLLRTRMNLECAVTPEMLEIACAVKPSDVCLVPEKRTELTTEGGLDVAGAQAAVTDAVQLLAEAGIRVSLFIDPDARQIEAAARAGAPVIELHTGAYAEARDDAAVQAELARVRAAVAEGLRHGLRVNAGHGLHYGNVQAVAALDGIAELNIGHAIVAQSIFDGWDKAVRDMKALMVQARLAAVRGHA</sequence>
<reference key="1">
    <citation type="journal article" date="2003" name="Nat. Genet.">
        <title>Comparative analysis of the genome sequences of Bordetella pertussis, Bordetella parapertussis and Bordetella bronchiseptica.</title>
        <authorList>
            <person name="Parkhill J."/>
            <person name="Sebaihia M."/>
            <person name="Preston A."/>
            <person name="Murphy L.D."/>
            <person name="Thomson N.R."/>
            <person name="Harris D.E."/>
            <person name="Holden M.T.G."/>
            <person name="Churcher C.M."/>
            <person name="Bentley S.D."/>
            <person name="Mungall K.L."/>
            <person name="Cerdeno-Tarraga A.-M."/>
            <person name="Temple L."/>
            <person name="James K.D."/>
            <person name="Harris B."/>
            <person name="Quail M.A."/>
            <person name="Achtman M."/>
            <person name="Atkin R."/>
            <person name="Baker S."/>
            <person name="Basham D."/>
            <person name="Bason N."/>
            <person name="Cherevach I."/>
            <person name="Chillingworth T."/>
            <person name="Collins M."/>
            <person name="Cronin A."/>
            <person name="Davis P."/>
            <person name="Doggett J."/>
            <person name="Feltwell T."/>
            <person name="Goble A."/>
            <person name="Hamlin N."/>
            <person name="Hauser H."/>
            <person name="Holroyd S."/>
            <person name="Jagels K."/>
            <person name="Leather S."/>
            <person name="Moule S."/>
            <person name="Norberczak H."/>
            <person name="O'Neil S."/>
            <person name="Ormond D."/>
            <person name="Price C."/>
            <person name="Rabbinowitsch E."/>
            <person name="Rutter S."/>
            <person name="Sanders M."/>
            <person name="Saunders D."/>
            <person name="Seeger K."/>
            <person name="Sharp S."/>
            <person name="Simmonds M."/>
            <person name="Skelton J."/>
            <person name="Squares R."/>
            <person name="Squares S."/>
            <person name="Stevens K."/>
            <person name="Unwin L."/>
            <person name="Whitehead S."/>
            <person name="Barrell B.G."/>
            <person name="Maskell D.J."/>
        </authorList>
    </citation>
    <scope>NUCLEOTIDE SEQUENCE [LARGE SCALE GENOMIC DNA]</scope>
    <source>
        <strain>12822 / ATCC BAA-587 / NCTC 13253</strain>
    </source>
</reference>
<accession>Q7W9J7</accession>